<sequence>MNAIQQKCRPKHQVLVLKCYPRTTKGAVDVKPNSSELSYLLYYAASRKSKFQKVGSFLEKKTASDVWRLRIGNVQVTLQILEALIEKNPKDLPLFAPSVLKILDLVLKSNDITMVESSTPTFEAFCANHDASSLFADQAYLKQYESIVRQYASLASTRRSPGKTTPSKPVAMRWRNTGLEAIRSVASSDALASVQGTQYDILVPMILENLWTDNEEFLEILLHRAHLEEKVDTDKLLLRRRTSVATVRTAEGGNEPNPIALSGSAMDVDKLAEEDIGVLAITCLKQIFVGPNRSQIHAATVALLKFIEERVNQDENVVKKSARTGRDSGWAIKIFGLISRWAPVQERYVILMTTMDTLVRMPLSDESMRHHIVWMAMMGALLRSDVNLIGLSVMDVLLALMQHMKRLVQLPGDPSGASASDMLLPGQPDPRSPTTIAASTAAQATAAARKELLERIQQTIGDLATHVYYADQISDMISAIIQRLRPSKSNSPGNTSPQGEKIDGQVASPEDSTVESLFSLTVAKVAALKAIKTILLVANPRTKMAGNLGLARNKVSISVWEGTQWLLRDPEGLVRKAYADAVITWLDRETVKGDLKAVDESAPNPRASIRYTRDLGKMDVSPARRAASSASTRREPKPTRLHFLNLIHVAIYDNALQYVDYETDINLLHVLLAKLVDRLGINAVRYGLPMIFRLQEDIQEVDAPIGKVRVGCLVHGYLWALTEKFDFENTLVGRAIHNEIIRRRSKHFWIEGVHVPPPLLELIGTPGMVKPQPKMPLNQIESEALLPFDDRFALIDSICTGYQESFASPPTSPAASPGRSFTSPILGSQMSGLSPHTATDDEREVPSRFRDQMYVEWTRDLVIAMVQAGSKSASLNGSKTGTTGTSRYANARLGGNTGSPMASQQNLRPYSQPAGKDTLAPQNNPLAKLRKSSLRSNATPSPASSGPIRSGVTSVDQLKMVLSGQVAPAVVRAQTSHGNGAGGLGADDSTDSLVSYDMTVSEMSFNAGSVTYTPSHPVPRPPSRSRSHSRERRAASRSGAESPGGFDQLSRSNSFGKSNGNGRTIEDGRHDRHDDDGVPPVPPLPSGVSSPPLPPSRDGKSPSPRSPSTQAPVLPPVSLESSAIRPAKTRSLKSRGRHSRSGSIPSAPAPHAMRPATSAGHGVVGGDSAFDLDALLLGIDTKDMQGTLGNVTRPVY</sequence>
<comment type="similarity">
    <text evidence="2">Belongs to the EFR3 family.</text>
</comment>
<dbReference type="EMBL" id="CM000230">
    <property type="protein sequence ID" value="EAQ71127.1"/>
    <property type="molecule type" value="Genomic_DNA"/>
</dbReference>
<dbReference type="EMBL" id="CM001237">
    <property type="protein sequence ID" value="EHA46217.1"/>
    <property type="molecule type" value="Genomic_DNA"/>
</dbReference>
<dbReference type="RefSeq" id="XP_003720960.1">
    <property type="nucleotide sequence ID" value="XM_003720912.1"/>
</dbReference>
<dbReference type="STRING" id="242507.Q2KG01"/>
<dbReference type="EnsemblFungi" id="MGG_02781T0">
    <property type="protein sequence ID" value="MGG_02781T0"/>
    <property type="gene ID" value="MGG_02781"/>
</dbReference>
<dbReference type="GeneID" id="2682669"/>
<dbReference type="KEGG" id="mgr:MGG_02781"/>
<dbReference type="VEuPathDB" id="FungiDB:MGG_02781"/>
<dbReference type="eggNOG" id="KOG1877">
    <property type="taxonomic scope" value="Eukaryota"/>
</dbReference>
<dbReference type="HOGENOM" id="CLU_003271_0_0_1"/>
<dbReference type="InParanoid" id="Q2KG01"/>
<dbReference type="OMA" id="ATHVYYT"/>
<dbReference type="OrthoDB" id="19232at2759"/>
<dbReference type="Proteomes" id="UP000009058">
    <property type="component" value="Chromosome 7"/>
</dbReference>
<dbReference type="GO" id="GO:0005886">
    <property type="term" value="C:plasma membrane"/>
    <property type="evidence" value="ECO:0007669"/>
    <property type="project" value="TreeGrafter"/>
</dbReference>
<dbReference type="GO" id="GO:0072659">
    <property type="term" value="P:protein localization to plasma membrane"/>
    <property type="evidence" value="ECO:0007669"/>
    <property type="project" value="InterPro"/>
</dbReference>
<dbReference type="InterPro" id="IPR039786">
    <property type="entry name" value="EFR3"/>
</dbReference>
<dbReference type="InterPro" id="IPR049150">
    <property type="entry name" value="EFR3_HEAT-like_rpt"/>
</dbReference>
<dbReference type="PANTHER" id="PTHR47766">
    <property type="entry name" value="PROTEIN EFR3"/>
    <property type="match status" value="1"/>
</dbReference>
<dbReference type="PANTHER" id="PTHR47766:SF1">
    <property type="entry name" value="PROTEIN EFR3"/>
    <property type="match status" value="1"/>
</dbReference>
<dbReference type="Pfam" id="PF21072">
    <property type="entry name" value="EFR3"/>
    <property type="match status" value="2"/>
</dbReference>
<protein>
    <recommendedName>
        <fullName>Protein EFR3</fullName>
    </recommendedName>
</protein>
<accession>Q2KG01</accession>
<accession>A4RBU7</accession>
<accession>G4NJ03</accession>
<evidence type="ECO:0000256" key="1">
    <source>
        <dbReference type="SAM" id="MobiDB-lite"/>
    </source>
</evidence>
<evidence type="ECO:0000305" key="2"/>
<organism>
    <name type="scientific">Pyricularia oryzae (strain 70-15 / ATCC MYA-4617 / FGSC 8958)</name>
    <name type="common">Rice blast fungus</name>
    <name type="synonym">Magnaporthe oryzae</name>
    <dbReference type="NCBI Taxonomy" id="242507"/>
    <lineage>
        <taxon>Eukaryota</taxon>
        <taxon>Fungi</taxon>
        <taxon>Dikarya</taxon>
        <taxon>Ascomycota</taxon>
        <taxon>Pezizomycotina</taxon>
        <taxon>Sordariomycetes</taxon>
        <taxon>Sordariomycetidae</taxon>
        <taxon>Magnaporthales</taxon>
        <taxon>Pyriculariaceae</taxon>
        <taxon>Pyricularia</taxon>
    </lineage>
</organism>
<reference key="1">
    <citation type="journal article" date="2005" name="Nature">
        <title>The genome sequence of the rice blast fungus Magnaporthe grisea.</title>
        <authorList>
            <person name="Dean R.A."/>
            <person name="Talbot N.J."/>
            <person name="Ebbole D.J."/>
            <person name="Farman M.L."/>
            <person name="Mitchell T.K."/>
            <person name="Orbach M.J."/>
            <person name="Thon M.R."/>
            <person name="Kulkarni R."/>
            <person name="Xu J.-R."/>
            <person name="Pan H."/>
            <person name="Read N.D."/>
            <person name="Lee Y.-H."/>
            <person name="Carbone I."/>
            <person name="Brown D."/>
            <person name="Oh Y.Y."/>
            <person name="Donofrio N."/>
            <person name="Jeong J.S."/>
            <person name="Soanes D.M."/>
            <person name="Djonovic S."/>
            <person name="Kolomiets E."/>
            <person name="Rehmeyer C."/>
            <person name="Li W."/>
            <person name="Harding M."/>
            <person name="Kim S."/>
            <person name="Lebrun M.-H."/>
            <person name="Bohnert H."/>
            <person name="Coughlan S."/>
            <person name="Butler J."/>
            <person name="Calvo S.E."/>
            <person name="Ma L.-J."/>
            <person name="Nicol R."/>
            <person name="Purcell S."/>
            <person name="Nusbaum C."/>
            <person name="Galagan J.E."/>
            <person name="Birren B.W."/>
        </authorList>
    </citation>
    <scope>NUCLEOTIDE SEQUENCE [LARGE SCALE GENOMIC DNA]</scope>
    <source>
        <strain>70-15 / ATCC MYA-4617 / FGSC 8958</strain>
    </source>
</reference>
<feature type="chain" id="PRO_0000270781" description="Protein EFR3">
    <location>
        <begin position="1"/>
        <end position="1196"/>
    </location>
</feature>
<feature type="region of interest" description="Disordered" evidence="1">
    <location>
        <begin position="486"/>
        <end position="508"/>
    </location>
</feature>
<feature type="region of interest" description="Disordered" evidence="1">
    <location>
        <begin position="806"/>
        <end position="847"/>
    </location>
</feature>
<feature type="region of interest" description="Disordered" evidence="1">
    <location>
        <begin position="872"/>
        <end position="951"/>
    </location>
</feature>
<feature type="region of interest" description="Disordered" evidence="1">
    <location>
        <begin position="1008"/>
        <end position="1160"/>
    </location>
</feature>
<feature type="compositionally biased region" description="Polar residues" evidence="1">
    <location>
        <begin position="487"/>
        <end position="498"/>
    </location>
</feature>
<feature type="compositionally biased region" description="Low complexity" evidence="1">
    <location>
        <begin position="806"/>
        <end position="817"/>
    </location>
</feature>
<feature type="compositionally biased region" description="Polar residues" evidence="1">
    <location>
        <begin position="819"/>
        <end position="837"/>
    </location>
</feature>
<feature type="compositionally biased region" description="Basic and acidic residues" evidence="1">
    <location>
        <begin position="838"/>
        <end position="847"/>
    </location>
</feature>
<feature type="compositionally biased region" description="Polar residues" evidence="1">
    <location>
        <begin position="872"/>
        <end position="888"/>
    </location>
</feature>
<feature type="compositionally biased region" description="Polar residues" evidence="1">
    <location>
        <begin position="898"/>
        <end position="909"/>
    </location>
</feature>
<feature type="compositionally biased region" description="Polar residues" evidence="1">
    <location>
        <begin position="934"/>
        <end position="944"/>
    </location>
</feature>
<feature type="compositionally biased region" description="Low complexity" evidence="1">
    <location>
        <begin position="1036"/>
        <end position="1045"/>
    </location>
</feature>
<feature type="compositionally biased region" description="Polar residues" evidence="1">
    <location>
        <begin position="1049"/>
        <end position="1062"/>
    </location>
</feature>
<feature type="compositionally biased region" description="Basic and acidic residues" evidence="1">
    <location>
        <begin position="1064"/>
        <end position="1076"/>
    </location>
</feature>
<feature type="compositionally biased region" description="Pro residues" evidence="1">
    <location>
        <begin position="1079"/>
        <end position="1095"/>
    </location>
</feature>
<feature type="compositionally biased region" description="Basic residues" evidence="1">
    <location>
        <begin position="1127"/>
        <end position="1140"/>
    </location>
</feature>
<gene>
    <name type="primary">EFR3</name>
    <name type="ORF">MGCH7_ch7g534</name>
    <name type="ORF">MGG_02781</name>
</gene>
<name>EFR3_PYRO7</name>
<proteinExistence type="inferred from homology"/>
<keyword id="KW-1185">Reference proteome</keyword>